<reference key="1">
    <citation type="journal article" date="2008" name="Foodborne Pathog. Dis.">
        <title>The complete genome sequence and analysis of the human pathogen Campylobacter lari.</title>
        <authorList>
            <person name="Miller W.G."/>
            <person name="Wang G."/>
            <person name="Binnewies T.T."/>
            <person name="Parker C.T."/>
        </authorList>
    </citation>
    <scope>NUCLEOTIDE SEQUENCE [LARGE SCALE GENOMIC DNA]</scope>
    <source>
        <strain>RM2100 / D67 / ATCC BAA-1060</strain>
    </source>
</reference>
<dbReference type="EC" id="2.7.7.6" evidence="1"/>
<dbReference type="EMBL" id="CP000932">
    <property type="protein sequence ID" value="ACM63803.1"/>
    <property type="molecule type" value="Genomic_DNA"/>
</dbReference>
<dbReference type="RefSeq" id="WP_012661186.1">
    <property type="nucleotide sequence ID" value="NC_012039.1"/>
</dbReference>
<dbReference type="SMR" id="B9KFG8"/>
<dbReference type="STRING" id="306263.Cla_0450"/>
<dbReference type="KEGG" id="cla:CLA_0450"/>
<dbReference type="PATRIC" id="fig|306263.5.peg.447"/>
<dbReference type="eggNOG" id="COG0086">
    <property type="taxonomic scope" value="Bacteria"/>
</dbReference>
<dbReference type="HOGENOM" id="CLU_000524_3_1_7"/>
<dbReference type="Proteomes" id="UP000007727">
    <property type="component" value="Chromosome"/>
</dbReference>
<dbReference type="GO" id="GO:0000428">
    <property type="term" value="C:DNA-directed RNA polymerase complex"/>
    <property type="evidence" value="ECO:0007669"/>
    <property type="project" value="UniProtKB-KW"/>
</dbReference>
<dbReference type="GO" id="GO:0003677">
    <property type="term" value="F:DNA binding"/>
    <property type="evidence" value="ECO:0007669"/>
    <property type="project" value="UniProtKB-UniRule"/>
</dbReference>
<dbReference type="GO" id="GO:0003899">
    <property type="term" value="F:DNA-directed RNA polymerase activity"/>
    <property type="evidence" value="ECO:0007669"/>
    <property type="project" value="UniProtKB-UniRule"/>
</dbReference>
<dbReference type="GO" id="GO:0000287">
    <property type="term" value="F:magnesium ion binding"/>
    <property type="evidence" value="ECO:0007669"/>
    <property type="project" value="UniProtKB-UniRule"/>
</dbReference>
<dbReference type="GO" id="GO:0008270">
    <property type="term" value="F:zinc ion binding"/>
    <property type="evidence" value="ECO:0007669"/>
    <property type="project" value="UniProtKB-UniRule"/>
</dbReference>
<dbReference type="GO" id="GO:0006351">
    <property type="term" value="P:DNA-templated transcription"/>
    <property type="evidence" value="ECO:0007669"/>
    <property type="project" value="UniProtKB-UniRule"/>
</dbReference>
<dbReference type="CDD" id="cd02655">
    <property type="entry name" value="RNAP_beta'_C"/>
    <property type="match status" value="1"/>
</dbReference>
<dbReference type="CDD" id="cd01609">
    <property type="entry name" value="RNAP_beta'_N"/>
    <property type="match status" value="1"/>
</dbReference>
<dbReference type="FunFam" id="1.10.132.30:FF:000003">
    <property type="entry name" value="DNA-directed RNA polymerase subunit beta"/>
    <property type="match status" value="1"/>
</dbReference>
<dbReference type="Gene3D" id="1.10.132.30">
    <property type="match status" value="1"/>
</dbReference>
<dbReference type="Gene3D" id="1.10.150.390">
    <property type="match status" value="1"/>
</dbReference>
<dbReference type="Gene3D" id="1.10.1790.20">
    <property type="match status" value="1"/>
</dbReference>
<dbReference type="Gene3D" id="1.10.40.90">
    <property type="match status" value="1"/>
</dbReference>
<dbReference type="Gene3D" id="2.40.40.20">
    <property type="match status" value="1"/>
</dbReference>
<dbReference type="Gene3D" id="2.40.50.100">
    <property type="match status" value="3"/>
</dbReference>
<dbReference type="Gene3D" id="4.10.860.120">
    <property type="entry name" value="RNA polymerase II, clamp domain"/>
    <property type="match status" value="1"/>
</dbReference>
<dbReference type="Gene3D" id="1.10.274.100">
    <property type="entry name" value="RNA polymerase Rpb1, domain 3"/>
    <property type="match status" value="2"/>
</dbReference>
<dbReference type="HAMAP" id="MF_01322">
    <property type="entry name" value="RNApol_bact_RpoC"/>
    <property type="match status" value="1"/>
</dbReference>
<dbReference type="InterPro" id="IPR045867">
    <property type="entry name" value="DNA-dir_RpoC_beta_prime"/>
</dbReference>
<dbReference type="InterPro" id="IPR012754">
    <property type="entry name" value="DNA-dir_RpoC_beta_prime_bact"/>
</dbReference>
<dbReference type="InterPro" id="IPR000722">
    <property type="entry name" value="RNA_pol_asu"/>
</dbReference>
<dbReference type="InterPro" id="IPR006592">
    <property type="entry name" value="RNA_pol_N"/>
</dbReference>
<dbReference type="InterPro" id="IPR007080">
    <property type="entry name" value="RNA_pol_Rpb1_1"/>
</dbReference>
<dbReference type="InterPro" id="IPR007066">
    <property type="entry name" value="RNA_pol_Rpb1_3"/>
</dbReference>
<dbReference type="InterPro" id="IPR042102">
    <property type="entry name" value="RNA_pol_Rpb1_3_sf"/>
</dbReference>
<dbReference type="InterPro" id="IPR007083">
    <property type="entry name" value="RNA_pol_Rpb1_4"/>
</dbReference>
<dbReference type="InterPro" id="IPR007081">
    <property type="entry name" value="RNA_pol_Rpb1_5"/>
</dbReference>
<dbReference type="InterPro" id="IPR044893">
    <property type="entry name" value="RNA_pol_Rpb1_clamp_domain"/>
</dbReference>
<dbReference type="InterPro" id="IPR038120">
    <property type="entry name" value="Rpb1_funnel_sf"/>
</dbReference>
<dbReference type="NCBIfam" id="TIGR02386">
    <property type="entry name" value="rpoC_TIGR"/>
    <property type="match status" value="1"/>
</dbReference>
<dbReference type="PANTHER" id="PTHR19376">
    <property type="entry name" value="DNA-DIRECTED RNA POLYMERASE"/>
    <property type="match status" value="1"/>
</dbReference>
<dbReference type="PANTHER" id="PTHR19376:SF54">
    <property type="entry name" value="DNA-DIRECTED RNA POLYMERASE SUBUNIT BETA"/>
    <property type="match status" value="1"/>
</dbReference>
<dbReference type="Pfam" id="PF04997">
    <property type="entry name" value="RNA_pol_Rpb1_1"/>
    <property type="match status" value="1"/>
</dbReference>
<dbReference type="Pfam" id="PF00623">
    <property type="entry name" value="RNA_pol_Rpb1_2"/>
    <property type="match status" value="2"/>
</dbReference>
<dbReference type="Pfam" id="PF04983">
    <property type="entry name" value="RNA_pol_Rpb1_3"/>
    <property type="match status" value="1"/>
</dbReference>
<dbReference type="Pfam" id="PF05000">
    <property type="entry name" value="RNA_pol_Rpb1_4"/>
    <property type="match status" value="1"/>
</dbReference>
<dbReference type="Pfam" id="PF04998">
    <property type="entry name" value="RNA_pol_Rpb1_5"/>
    <property type="match status" value="1"/>
</dbReference>
<dbReference type="SMART" id="SM00663">
    <property type="entry name" value="RPOLA_N"/>
    <property type="match status" value="1"/>
</dbReference>
<dbReference type="SUPFAM" id="SSF64484">
    <property type="entry name" value="beta and beta-prime subunits of DNA dependent RNA-polymerase"/>
    <property type="match status" value="1"/>
</dbReference>
<accession>B9KFG8</accession>
<comment type="function">
    <text evidence="1">DNA-dependent RNA polymerase catalyzes the transcription of DNA into RNA using the four ribonucleoside triphosphates as substrates.</text>
</comment>
<comment type="catalytic activity">
    <reaction evidence="1">
        <text>RNA(n) + a ribonucleoside 5'-triphosphate = RNA(n+1) + diphosphate</text>
        <dbReference type="Rhea" id="RHEA:21248"/>
        <dbReference type="Rhea" id="RHEA-COMP:14527"/>
        <dbReference type="Rhea" id="RHEA-COMP:17342"/>
        <dbReference type="ChEBI" id="CHEBI:33019"/>
        <dbReference type="ChEBI" id="CHEBI:61557"/>
        <dbReference type="ChEBI" id="CHEBI:140395"/>
        <dbReference type="EC" id="2.7.7.6"/>
    </reaction>
</comment>
<comment type="cofactor">
    <cofactor evidence="1">
        <name>Mg(2+)</name>
        <dbReference type="ChEBI" id="CHEBI:18420"/>
    </cofactor>
    <text evidence="1">Binds 1 Mg(2+) ion per subunit.</text>
</comment>
<comment type="cofactor">
    <cofactor evidence="1">
        <name>Zn(2+)</name>
        <dbReference type="ChEBI" id="CHEBI:29105"/>
    </cofactor>
    <text evidence="1">Binds 2 Zn(2+) ions per subunit.</text>
</comment>
<comment type="subunit">
    <text evidence="1">The RNAP catalytic core consists of 2 alpha, 1 beta, 1 beta' and 1 omega subunit. When a sigma factor is associated with the core the holoenzyme is formed, which can initiate transcription.</text>
</comment>
<comment type="similarity">
    <text evidence="1">Belongs to the RNA polymerase beta' chain family.</text>
</comment>
<name>RPOC_CAMLR</name>
<organism>
    <name type="scientific">Campylobacter lari (strain RM2100 / D67 / ATCC BAA-1060)</name>
    <dbReference type="NCBI Taxonomy" id="306263"/>
    <lineage>
        <taxon>Bacteria</taxon>
        <taxon>Pseudomonadati</taxon>
        <taxon>Campylobacterota</taxon>
        <taxon>Epsilonproteobacteria</taxon>
        <taxon>Campylobacterales</taxon>
        <taxon>Campylobacteraceae</taxon>
        <taxon>Campylobacter</taxon>
    </lineage>
</organism>
<gene>
    <name evidence="1" type="primary">rpoC</name>
    <name type="ordered locus">Cla_0450</name>
</gene>
<keyword id="KW-0240">DNA-directed RNA polymerase</keyword>
<keyword id="KW-0460">Magnesium</keyword>
<keyword id="KW-0479">Metal-binding</keyword>
<keyword id="KW-0548">Nucleotidyltransferase</keyword>
<keyword id="KW-1185">Reference proteome</keyword>
<keyword id="KW-0804">Transcription</keyword>
<keyword id="KW-0808">Transferase</keyword>
<keyword id="KW-0862">Zinc</keyword>
<feature type="chain" id="PRO_1000165837" description="DNA-directed RNA polymerase subunit beta'">
    <location>
        <begin position="1"/>
        <end position="1517"/>
    </location>
</feature>
<feature type="binding site" evidence="1">
    <location>
        <position position="71"/>
    </location>
    <ligand>
        <name>Zn(2+)</name>
        <dbReference type="ChEBI" id="CHEBI:29105"/>
        <label>1</label>
    </ligand>
</feature>
<feature type="binding site" evidence="1">
    <location>
        <position position="73"/>
    </location>
    <ligand>
        <name>Zn(2+)</name>
        <dbReference type="ChEBI" id="CHEBI:29105"/>
        <label>1</label>
    </ligand>
</feature>
<feature type="binding site" evidence="1">
    <location>
        <position position="86"/>
    </location>
    <ligand>
        <name>Zn(2+)</name>
        <dbReference type="ChEBI" id="CHEBI:29105"/>
        <label>1</label>
    </ligand>
</feature>
<feature type="binding site" evidence="1">
    <location>
        <position position="89"/>
    </location>
    <ligand>
        <name>Zn(2+)</name>
        <dbReference type="ChEBI" id="CHEBI:29105"/>
        <label>1</label>
    </ligand>
</feature>
<feature type="binding site" evidence="1">
    <location>
        <position position="482"/>
    </location>
    <ligand>
        <name>Mg(2+)</name>
        <dbReference type="ChEBI" id="CHEBI:18420"/>
    </ligand>
</feature>
<feature type="binding site" evidence="1">
    <location>
        <position position="484"/>
    </location>
    <ligand>
        <name>Mg(2+)</name>
        <dbReference type="ChEBI" id="CHEBI:18420"/>
    </ligand>
</feature>
<feature type="binding site" evidence="1">
    <location>
        <position position="486"/>
    </location>
    <ligand>
        <name>Mg(2+)</name>
        <dbReference type="ChEBI" id="CHEBI:18420"/>
    </ligand>
</feature>
<feature type="binding site" evidence="1">
    <location>
        <position position="812"/>
    </location>
    <ligand>
        <name>Zn(2+)</name>
        <dbReference type="ChEBI" id="CHEBI:29105"/>
        <label>2</label>
    </ligand>
</feature>
<feature type="binding site" evidence="1">
    <location>
        <position position="886"/>
    </location>
    <ligand>
        <name>Zn(2+)</name>
        <dbReference type="ChEBI" id="CHEBI:29105"/>
        <label>2</label>
    </ligand>
</feature>
<feature type="binding site" evidence="1">
    <location>
        <position position="893"/>
    </location>
    <ligand>
        <name>Zn(2+)</name>
        <dbReference type="ChEBI" id="CHEBI:29105"/>
        <label>2</label>
    </ligand>
</feature>
<feature type="binding site" evidence="1">
    <location>
        <position position="896"/>
    </location>
    <ligand>
        <name>Zn(2+)</name>
        <dbReference type="ChEBI" id="CHEBI:29105"/>
        <label>2</label>
    </ligand>
</feature>
<sequence>MSKFKPIEIKEDGRPRDFEAFQLRLASPEKIKSWSYGEVKKPETINYRTLKPERDGLFCAKIFGPVRDYECLCGKYKKMRFKGIKCEKCGVEVTTSKVRRSRMGHIELVTPVAHIWYVNSLPSRIGTLLGVKMKDLERVLYYEAYIVENPGDAYYDNENSKKVEFCDVLNEEQYLNLMQRYESSGFKARMGGEVVRDLLANLDLVALLNQLKEDIASTNSEAKKKTIIKRLKVVENFLNSNLNSNTNIDEVVPNRPEWMMITNLPVLPPDLRPLVALDGGKFAVSDVNDLYRRVINRNTRLKRLMELDAPEIIIRNEKRMLQEAVDALFDNGRRANAVKGANKRPLKSLSEIIKGKQGRFRQNLLGKRVDFSGRSVIVVGPKLRMDQCGLPKKMALELFKPHLLAKLEEKGYATTVKQAKKMIENKTNEVWECLEEVVKGHPVMLNRAPTLHKLSIQAFHPVLVEGKAIQLHPLVCAAFNADFDGDQMAVHVPLSQEAIAECKVLMLSSMNILLPASGRSVTVPSQDMVLGIYYLSLEKDGAKGEHKICTGIEEVMIALEAKSLDIHASIRSVVDGRKITTTAGRLIIKSILPDFVPENMWNKVMKKKDIAALVDYVYKEGGLEVSASFLDKLKDLGFEYATKAGISISIADIIVPDQKQKNIDEAKKQVREIQNSYNLGLITSGERYNKIIDIWKSTNNILSKDMMELIKKDKEGFNSIYMMADSGARGSAAQISQLAAMRGLMAKPDGSIIETPIISNFREGLNVLEYFISTHGARKGLADTALKTANAGYLTRKLIDVAQNVKVTVDDCGAHEGVEINEITADGVVIETLEERILGRVLAENIIDSITNEILFSEGTLIDEEKARVIVESGVKSVSIRTPITCKAKKGVCSKCYGINLGEGKLVKPGEAVGIISAQSIGEPGTQLTLRTFHSGGTASTDLQDRQVVAHKEGFVRFYNLNTYEDRQGKTIVANHRNAAILLVEPKIKAPFKGTIHIEHAYEDVVVSVKAKNNEAKFILRKYDLAKANELAGVSGNIEGKLYIPYSDGVEVAENESIVEVIKEGWNIPNRIPYASELLVKDGDPITQDIIAGAKGTLKFYMLKGDGLDRIKNLKKGDVVKEKGVFVVIADENDREAKRHYIPRESVIEFDDSAFVDNPKAIIAKSSKEDKTIIAEWDAYNNTVIAEVAGTINFEDIESGYSADEQIDEATGKRSLVINEYLPSGVRPAILILGEKGKMVRYQLEPKTVIYVNDGDKVKQADILAKTPKAATKSKDITGGLPRVSELFEARKPKNTAVIAEIDGVVRFDKPLRSKERIIIQAEDGSSAEYLIDKSKRIQVRDGEFIHAGEKLTDGVISSHDVLRILGEKALHYYLISEIQQVYRGQGVVISDKHIEIIVSQMLRQVKIVDSGHTNFIVGDLVSRRKFREENERILKYGGEPAVAEPVLLGVTRAAIGSDSVISAASFQETTKVLTEASIAGKFDYLEDLKENVILGRMIPVGTGLYSEQNIKLKQQN</sequence>
<proteinExistence type="inferred from homology"/>
<protein>
    <recommendedName>
        <fullName evidence="1">DNA-directed RNA polymerase subunit beta'</fullName>
        <shortName evidence="1">RNAP subunit beta'</shortName>
        <ecNumber evidence="1">2.7.7.6</ecNumber>
    </recommendedName>
    <alternativeName>
        <fullName evidence="1">RNA polymerase subunit beta'</fullName>
    </alternativeName>
    <alternativeName>
        <fullName evidence="1">Transcriptase subunit beta'</fullName>
    </alternativeName>
</protein>
<evidence type="ECO:0000255" key="1">
    <source>
        <dbReference type="HAMAP-Rule" id="MF_01322"/>
    </source>
</evidence>